<dbReference type="EMBL" id="CP000381">
    <property type="protein sequence ID" value="ABX72737.1"/>
    <property type="molecule type" value="Genomic_DNA"/>
</dbReference>
<dbReference type="RefSeq" id="WP_002214315.1">
    <property type="nucleotide sequence ID" value="NC_010120.1"/>
</dbReference>
<dbReference type="SMR" id="A9M2D3"/>
<dbReference type="GeneID" id="93386578"/>
<dbReference type="KEGG" id="nmn:NMCC_0538"/>
<dbReference type="HOGENOM" id="CLU_100590_5_1_4"/>
<dbReference type="Proteomes" id="UP000001177">
    <property type="component" value="Chromosome"/>
</dbReference>
<dbReference type="GO" id="GO:0005737">
    <property type="term" value="C:cytoplasm"/>
    <property type="evidence" value="ECO:0007669"/>
    <property type="project" value="UniProtKB-ARBA"/>
</dbReference>
<dbReference type="GO" id="GO:0015935">
    <property type="term" value="C:small ribosomal subunit"/>
    <property type="evidence" value="ECO:0007669"/>
    <property type="project" value="TreeGrafter"/>
</dbReference>
<dbReference type="GO" id="GO:0003735">
    <property type="term" value="F:structural constituent of ribosome"/>
    <property type="evidence" value="ECO:0007669"/>
    <property type="project" value="InterPro"/>
</dbReference>
<dbReference type="GO" id="GO:0006412">
    <property type="term" value="P:translation"/>
    <property type="evidence" value="ECO:0007669"/>
    <property type="project" value="UniProtKB-UniRule"/>
</dbReference>
<dbReference type="FunFam" id="3.30.1320.10:FF:000001">
    <property type="entry name" value="30S ribosomal protein S16"/>
    <property type="match status" value="1"/>
</dbReference>
<dbReference type="Gene3D" id="3.30.1320.10">
    <property type="match status" value="1"/>
</dbReference>
<dbReference type="HAMAP" id="MF_00385">
    <property type="entry name" value="Ribosomal_bS16"/>
    <property type="match status" value="1"/>
</dbReference>
<dbReference type="InterPro" id="IPR000307">
    <property type="entry name" value="Ribosomal_bS16"/>
</dbReference>
<dbReference type="InterPro" id="IPR023803">
    <property type="entry name" value="Ribosomal_bS16_dom_sf"/>
</dbReference>
<dbReference type="NCBIfam" id="TIGR00002">
    <property type="entry name" value="S16"/>
    <property type="match status" value="1"/>
</dbReference>
<dbReference type="PANTHER" id="PTHR12919">
    <property type="entry name" value="30S RIBOSOMAL PROTEIN S16"/>
    <property type="match status" value="1"/>
</dbReference>
<dbReference type="PANTHER" id="PTHR12919:SF20">
    <property type="entry name" value="SMALL RIBOSOMAL SUBUNIT PROTEIN BS16M"/>
    <property type="match status" value="1"/>
</dbReference>
<dbReference type="Pfam" id="PF00886">
    <property type="entry name" value="Ribosomal_S16"/>
    <property type="match status" value="1"/>
</dbReference>
<dbReference type="SUPFAM" id="SSF54565">
    <property type="entry name" value="Ribosomal protein S16"/>
    <property type="match status" value="1"/>
</dbReference>
<proteinExistence type="inferred from homology"/>
<comment type="similarity">
    <text evidence="1">Belongs to the bacterial ribosomal protein bS16 family.</text>
</comment>
<feature type="chain" id="PRO_1000080159" description="Small ribosomal subunit protein bS16">
    <location>
        <begin position="1"/>
        <end position="81"/>
    </location>
</feature>
<organism>
    <name type="scientific">Neisseria meningitidis serogroup C (strain 053442)</name>
    <dbReference type="NCBI Taxonomy" id="374833"/>
    <lineage>
        <taxon>Bacteria</taxon>
        <taxon>Pseudomonadati</taxon>
        <taxon>Pseudomonadota</taxon>
        <taxon>Betaproteobacteria</taxon>
        <taxon>Neisseriales</taxon>
        <taxon>Neisseriaceae</taxon>
        <taxon>Neisseria</taxon>
    </lineage>
</organism>
<sequence>MVVIRLARGGSKHRPFYNVIVTDSRSRRDGRFIERVGFYNPVANEKQERVRLNADRLNHWIAQGAQVSDSVAKLIKEQKAA</sequence>
<protein>
    <recommendedName>
        <fullName evidence="1">Small ribosomal subunit protein bS16</fullName>
    </recommendedName>
    <alternativeName>
        <fullName evidence="2">30S ribosomal protein S16</fullName>
    </alternativeName>
</protein>
<keyword id="KW-0687">Ribonucleoprotein</keyword>
<keyword id="KW-0689">Ribosomal protein</keyword>
<accession>A9M2D3</accession>
<reference key="1">
    <citation type="journal article" date="2008" name="Genomics">
        <title>Characterization of ST-4821 complex, a unique Neisseria meningitidis clone.</title>
        <authorList>
            <person name="Peng J."/>
            <person name="Yang L."/>
            <person name="Yang F."/>
            <person name="Yang J."/>
            <person name="Yan Y."/>
            <person name="Nie H."/>
            <person name="Zhang X."/>
            <person name="Xiong Z."/>
            <person name="Jiang Y."/>
            <person name="Cheng F."/>
            <person name="Xu X."/>
            <person name="Chen S."/>
            <person name="Sun L."/>
            <person name="Li W."/>
            <person name="Shen Y."/>
            <person name="Shao Z."/>
            <person name="Liang X."/>
            <person name="Xu J."/>
            <person name="Jin Q."/>
        </authorList>
    </citation>
    <scope>NUCLEOTIDE SEQUENCE [LARGE SCALE GENOMIC DNA]</scope>
    <source>
        <strain>053442</strain>
    </source>
</reference>
<gene>
    <name evidence="1" type="primary">rpsP</name>
    <name type="ordered locus">NMCC_0538</name>
</gene>
<name>RS16_NEIM0</name>
<evidence type="ECO:0000255" key="1">
    <source>
        <dbReference type="HAMAP-Rule" id="MF_00385"/>
    </source>
</evidence>
<evidence type="ECO:0000305" key="2"/>